<comment type="function">
    <text evidence="1">Has an important function as a repair enzyme for proteins that have been inactivated by oxidation. Catalyzes the reversible oxidation-reduction of methionine sulfoxide in proteins to methionine (By similarity).</text>
</comment>
<comment type="catalytic activity">
    <reaction>
        <text>L-methionyl-[protein] + [thioredoxin]-disulfide + H2O = L-methionyl-(S)-S-oxide-[protein] + [thioredoxin]-dithiol</text>
        <dbReference type="Rhea" id="RHEA:14217"/>
        <dbReference type="Rhea" id="RHEA-COMP:10698"/>
        <dbReference type="Rhea" id="RHEA-COMP:10700"/>
        <dbReference type="Rhea" id="RHEA-COMP:12313"/>
        <dbReference type="Rhea" id="RHEA-COMP:12315"/>
        <dbReference type="ChEBI" id="CHEBI:15377"/>
        <dbReference type="ChEBI" id="CHEBI:16044"/>
        <dbReference type="ChEBI" id="CHEBI:29950"/>
        <dbReference type="ChEBI" id="CHEBI:44120"/>
        <dbReference type="ChEBI" id="CHEBI:50058"/>
        <dbReference type="EC" id="1.8.4.11"/>
    </reaction>
</comment>
<comment type="catalytic activity">
    <reaction>
        <text>[thioredoxin]-disulfide + L-methionine + H2O = L-methionine (S)-S-oxide + [thioredoxin]-dithiol</text>
        <dbReference type="Rhea" id="RHEA:19993"/>
        <dbReference type="Rhea" id="RHEA-COMP:10698"/>
        <dbReference type="Rhea" id="RHEA-COMP:10700"/>
        <dbReference type="ChEBI" id="CHEBI:15377"/>
        <dbReference type="ChEBI" id="CHEBI:29950"/>
        <dbReference type="ChEBI" id="CHEBI:50058"/>
        <dbReference type="ChEBI" id="CHEBI:57844"/>
        <dbReference type="ChEBI" id="CHEBI:58772"/>
        <dbReference type="EC" id="1.8.4.11"/>
    </reaction>
</comment>
<comment type="similarity">
    <text evidence="2">Belongs to the MsrA Met sulfoxide reductase family.</text>
</comment>
<proteinExistence type="inferred from homology"/>
<evidence type="ECO:0000250" key="1"/>
<evidence type="ECO:0000305" key="2"/>
<gene>
    <name type="primary">msrA2</name>
    <name type="synonym">pmsR</name>
    <name type="ordered locus">LL2006</name>
    <name type="ORF">L67708</name>
</gene>
<organism>
    <name type="scientific">Lactococcus lactis subsp. lactis (strain IL1403)</name>
    <name type="common">Streptococcus lactis</name>
    <dbReference type="NCBI Taxonomy" id="272623"/>
    <lineage>
        <taxon>Bacteria</taxon>
        <taxon>Bacillati</taxon>
        <taxon>Bacillota</taxon>
        <taxon>Bacilli</taxon>
        <taxon>Lactobacillales</taxon>
        <taxon>Streptococcaceae</taxon>
        <taxon>Lactococcus</taxon>
    </lineage>
</organism>
<name>MSRA2_LACLA</name>
<accession>Q9CE42</accession>
<feature type="chain" id="PRO_0000138552" description="Peptide methionine sulfoxide reductase MsrA 2">
    <location>
        <begin position="1"/>
        <end position="172"/>
    </location>
</feature>
<feature type="active site" evidence="1">
    <location>
        <position position="12"/>
    </location>
</feature>
<keyword id="KW-0560">Oxidoreductase</keyword>
<keyword id="KW-1185">Reference proteome</keyword>
<sequence>MATERAIFAGGCFWCMVQPFEEREGILSVISGYTGGNVENPTYEQVKKHLTGHTEAVEIIFDNSKITYQSLVELYWTLTDPTDAFGQFEDRGDNYRPVIFVENEEQEKIAKESKAQLQASGNFDSPIVTSIETVQKFWPAEDYHQGFYKKNPEDYAQSSKIRHDFLEKQWKK</sequence>
<reference key="1">
    <citation type="journal article" date="2001" name="Genome Res.">
        <title>The complete genome sequence of the lactic acid bacterium Lactococcus lactis ssp. lactis IL1403.</title>
        <authorList>
            <person name="Bolotin A."/>
            <person name="Wincker P."/>
            <person name="Mauger S."/>
            <person name="Jaillon O."/>
            <person name="Malarme K."/>
            <person name="Weissenbach J."/>
            <person name="Ehrlich S.D."/>
            <person name="Sorokin A."/>
        </authorList>
    </citation>
    <scope>NUCLEOTIDE SEQUENCE [LARGE SCALE GENOMIC DNA]</scope>
    <source>
        <strain>IL1403</strain>
    </source>
</reference>
<protein>
    <recommendedName>
        <fullName>Peptide methionine sulfoxide reductase MsrA 2</fullName>
        <shortName>Protein-methionine-S-oxide reductase 2</shortName>
        <ecNumber>1.8.4.11</ecNumber>
    </recommendedName>
    <alternativeName>
        <fullName>Peptide-methionine (S)-S-oxide reductase 2</fullName>
        <shortName>Peptide Met(O) reductase 2</shortName>
    </alternativeName>
</protein>
<dbReference type="EC" id="1.8.4.11"/>
<dbReference type="EMBL" id="AE005176">
    <property type="protein sequence ID" value="AAK06104.1"/>
    <property type="molecule type" value="Genomic_DNA"/>
</dbReference>
<dbReference type="PIR" id="F86875">
    <property type="entry name" value="F86875"/>
</dbReference>
<dbReference type="RefSeq" id="NP_268163.1">
    <property type="nucleotide sequence ID" value="NC_002662.1"/>
</dbReference>
<dbReference type="SMR" id="Q9CE42"/>
<dbReference type="PaxDb" id="272623-L67708"/>
<dbReference type="EnsemblBacteria" id="AAK06104">
    <property type="protein sequence ID" value="AAK06104"/>
    <property type="gene ID" value="L67708"/>
</dbReference>
<dbReference type="KEGG" id="lla:L67708"/>
<dbReference type="PATRIC" id="fig|272623.7.peg.2161"/>
<dbReference type="eggNOG" id="COG0225">
    <property type="taxonomic scope" value="Bacteria"/>
</dbReference>
<dbReference type="HOGENOM" id="CLU_031040_10_1_9"/>
<dbReference type="OrthoDB" id="4174719at2"/>
<dbReference type="Proteomes" id="UP000002196">
    <property type="component" value="Chromosome"/>
</dbReference>
<dbReference type="GO" id="GO:0033744">
    <property type="term" value="F:L-methionine:thioredoxin-disulfide S-oxidoreductase activity"/>
    <property type="evidence" value="ECO:0007669"/>
    <property type="project" value="RHEA"/>
</dbReference>
<dbReference type="GO" id="GO:0008113">
    <property type="term" value="F:peptide-methionine (S)-S-oxide reductase activity"/>
    <property type="evidence" value="ECO:0007669"/>
    <property type="project" value="UniProtKB-UniRule"/>
</dbReference>
<dbReference type="GO" id="GO:0036211">
    <property type="term" value="P:protein modification process"/>
    <property type="evidence" value="ECO:0007669"/>
    <property type="project" value="UniProtKB-UniRule"/>
</dbReference>
<dbReference type="Gene3D" id="3.30.1060.10">
    <property type="entry name" value="Peptide methionine sulphoxide reductase MsrA"/>
    <property type="match status" value="1"/>
</dbReference>
<dbReference type="HAMAP" id="MF_01401">
    <property type="entry name" value="MsrA"/>
    <property type="match status" value="1"/>
</dbReference>
<dbReference type="InterPro" id="IPR002569">
    <property type="entry name" value="Met_Sox_Rdtase_MsrA_dom"/>
</dbReference>
<dbReference type="InterPro" id="IPR036509">
    <property type="entry name" value="Met_Sox_Rdtase_MsrA_sf"/>
</dbReference>
<dbReference type="NCBIfam" id="TIGR00401">
    <property type="entry name" value="msrA"/>
    <property type="match status" value="1"/>
</dbReference>
<dbReference type="PANTHER" id="PTHR43774">
    <property type="entry name" value="PEPTIDE METHIONINE SULFOXIDE REDUCTASE"/>
    <property type="match status" value="1"/>
</dbReference>
<dbReference type="PANTHER" id="PTHR43774:SF1">
    <property type="entry name" value="PEPTIDE METHIONINE SULFOXIDE REDUCTASE MSRA 2"/>
    <property type="match status" value="1"/>
</dbReference>
<dbReference type="Pfam" id="PF01625">
    <property type="entry name" value="PMSR"/>
    <property type="match status" value="1"/>
</dbReference>
<dbReference type="SUPFAM" id="SSF55068">
    <property type="entry name" value="Peptide methionine sulfoxide reductase"/>
    <property type="match status" value="1"/>
</dbReference>